<feature type="chain" id="PRO_1000058711" description="Putative competence-damage inducible protein">
    <location>
        <begin position="1"/>
        <end position="413"/>
    </location>
</feature>
<proteinExistence type="inferred from homology"/>
<protein>
    <recommendedName>
        <fullName evidence="1">Putative competence-damage inducible protein</fullName>
    </recommendedName>
</protein>
<keyword id="KW-1185">Reference proteome</keyword>
<evidence type="ECO:0000255" key="1">
    <source>
        <dbReference type="HAMAP-Rule" id="MF_00226"/>
    </source>
</evidence>
<dbReference type="EMBL" id="CP000423">
    <property type="protein sequence ID" value="ABJ69721.1"/>
    <property type="molecule type" value="Genomic_DNA"/>
</dbReference>
<dbReference type="RefSeq" id="WP_003601723.1">
    <property type="nucleotide sequence ID" value="NC_008526.1"/>
</dbReference>
<dbReference type="RefSeq" id="YP_806163.1">
    <property type="nucleotide sequence ID" value="NC_008526.1"/>
</dbReference>
<dbReference type="SMR" id="Q03AQ1"/>
<dbReference type="STRING" id="321967.LSEI_0922"/>
<dbReference type="PaxDb" id="321967-LSEI_0922"/>
<dbReference type="KEGG" id="lca:LSEI_0922"/>
<dbReference type="PATRIC" id="fig|321967.11.peg.892"/>
<dbReference type="HOGENOM" id="CLU_030805_9_3_9"/>
<dbReference type="Proteomes" id="UP000001651">
    <property type="component" value="Chromosome"/>
</dbReference>
<dbReference type="CDD" id="cd00885">
    <property type="entry name" value="cinA"/>
    <property type="match status" value="1"/>
</dbReference>
<dbReference type="Gene3D" id="3.30.70.2860">
    <property type="match status" value="1"/>
</dbReference>
<dbReference type="Gene3D" id="3.90.950.20">
    <property type="entry name" value="CinA-like"/>
    <property type="match status" value="1"/>
</dbReference>
<dbReference type="Gene3D" id="3.40.980.10">
    <property type="entry name" value="MoaB/Mog-like domain"/>
    <property type="match status" value="1"/>
</dbReference>
<dbReference type="HAMAP" id="MF_00226_B">
    <property type="entry name" value="CinA_B"/>
    <property type="match status" value="1"/>
</dbReference>
<dbReference type="InterPro" id="IPR050101">
    <property type="entry name" value="CinA"/>
</dbReference>
<dbReference type="InterPro" id="IPR036653">
    <property type="entry name" value="CinA-like_C"/>
</dbReference>
<dbReference type="InterPro" id="IPR008136">
    <property type="entry name" value="CinA_C"/>
</dbReference>
<dbReference type="InterPro" id="IPR041424">
    <property type="entry name" value="CinA_KH"/>
</dbReference>
<dbReference type="InterPro" id="IPR008135">
    <property type="entry name" value="Competence-induced_CinA"/>
</dbReference>
<dbReference type="InterPro" id="IPR036425">
    <property type="entry name" value="MoaB/Mog-like_dom_sf"/>
</dbReference>
<dbReference type="InterPro" id="IPR001453">
    <property type="entry name" value="MoaB/Mog_dom"/>
</dbReference>
<dbReference type="NCBIfam" id="TIGR00200">
    <property type="entry name" value="cinA_nterm"/>
    <property type="match status" value="1"/>
</dbReference>
<dbReference type="NCBIfam" id="TIGR00177">
    <property type="entry name" value="molyb_syn"/>
    <property type="match status" value="1"/>
</dbReference>
<dbReference type="NCBIfam" id="TIGR00199">
    <property type="entry name" value="PncC_domain"/>
    <property type="match status" value="1"/>
</dbReference>
<dbReference type="NCBIfam" id="NF001813">
    <property type="entry name" value="PRK00549.1"/>
    <property type="match status" value="1"/>
</dbReference>
<dbReference type="PANTHER" id="PTHR13939">
    <property type="entry name" value="NICOTINAMIDE-NUCLEOTIDE AMIDOHYDROLASE PNCC"/>
    <property type="match status" value="1"/>
</dbReference>
<dbReference type="PANTHER" id="PTHR13939:SF0">
    <property type="entry name" value="NMN AMIDOHYDROLASE-LIKE PROTEIN YFAY"/>
    <property type="match status" value="1"/>
</dbReference>
<dbReference type="Pfam" id="PF02464">
    <property type="entry name" value="CinA"/>
    <property type="match status" value="1"/>
</dbReference>
<dbReference type="Pfam" id="PF18146">
    <property type="entry name" value="CinA_KH"/>
    <property type="match status" value="1"/>
</dbReference>
<dbReference type="Pfam" id="PF00994">
    <property type="entry name" value="MoCF_biosynth"/>
    <property type="match status" value="1"/>
</dbReference>
<dbReference type="PIRSF" id="PIRSF006728">
    <property type="entry name" value="CinA"/>
    <property type="match status" value="1"/>
</dbReference>
<dbReference type="SMART" id="SM00852">
    <property type="entry name" value="MoCF_biosynth"/>
    <property type="match status" value="1"/>
</dbReference>
<dbReference type="SUPFAM" id="SSF142433">
    <property type="entry name" value="CinA-like"/>
    <property type="match status" value="1"/>
</dbReference>
<dbReference type="SUPFAM" id="SSF53218">
    <property type="entry name" value="Molybdenum cofactor biosynthesis proteins"/>
    <property type="match status" value="1"/>
</dbReference>
<gene>
    <name evidence="1" type="primary">cinA</name>
    <name type="ordered locus">LSEI_0922</name>
</gene>
<accession>Q03AQ1</accession>
<organism>
    <name type="scientific">Lacticaseibacillus paracasei (strain ATCC 334 / BCRC 17002 / CCUG 31169 / CIP 107868 / KCTC 3260 / NRRL B-441)</name>
    <name type="common">Lactobacillus paracasei</name>
    <dbReference type="NCBI Taxonomy" id="321967"/>
    <lineage>
        <taxon>Bacteria</taxon>
        <taxon>Bacillati</taxon>
        <taxon>Bacillota</taxon>
        <taxon>Bacilli</taxon>
        <taxon>Lactobacillales</taxon>
        <taxon>Lactobacillaceae</taxon>
        <taxon>Lacticaseibacillus</taxon>
    </lineage>
</organism>
<name>CINA_LACP3</name>
<sequence>MQAEIIAVGTEILMGQITNTNGAYMAKQLTALGIDSYHQQVVGDNGPRLEEAIKLAESRSNLVILIGGLGPTPDDLTKQTLAAHLNRKLVEDPDAMAKLQARVKQQQRPMTPNNQLQAMYPEGADILVNRVGLAVGAWIVNGQHTYVLLPGPPKEFVPMVDHELLPRLAKWSGHAEVMVSRVLRFFGIGESQLVTDLDDLIANQTDPTIATYIKDHEVTVRVTASGATEKDADAKLEPMVGAIMDRDGQYFYGYGDDNSLAKELVKTLAANDMQITAAESLTAGAFQAALGDVPGVSTYFKGGFVTYSLATKAAFLAIDARELAAHGVVSAFTAKAMAEHARRKAAADISVSFTGVAGPDTLEGQPAGTVWIGLARRGQLPEAHVYHFPGGRNDVRQRAVMTGMMLALRALQA</sequence>
<reference key="1">
    <citation type="journal article" date="2006" name="Proc. Natl. Acad. Sci. U.S.A.">
        <title>Comparative genomics of the lactic acid bacteria.</title>
        <authorList>
            <person name="Makarova K.S."/>
            <person name="Slesarev A."/>
            <person name="Wolf Y.I."/>
            <person name="Sorokin A."/>
            <person name="Mirkin B."/>
            <person name="Koonin E.V."/>
            <person name="Pavlov A."/>
            <person name="Pavlova N."/>
            <person name="Karamychev V."/>
            <person name="Polouchine N."/>
            <person name="Shakhova V."/>
            <person name="Grigoriev I."/>
            <person name="Lou Y."/>
            <person name="Rohksar D."/>
            <person name="Lucas S."/>
            <person name="Huang K."/>
            <person name="Goodstein D.M."/>
            <person name="Hawkins T."/>
            <person name="Plengvidhya V."/>
            <person name="Welker D."/>
            <person name="Hughes J."/>
            <person name="Goh Y."/>
            <person name="Benson A."/>
            <person name="Baldwin K."/>
            <person name="Lee J.-H."/>
            <person name="Diaz-Muniz I."/>
            <person name="Dosti B."/>
            <person name="Smeianov V."/>
            <person name="Wechter W."/>
            <person name="Barabote R."/>
            <person name="Lorca G."/>
            <person name="Altermann E."/>
            <person name="Barrangou R."/>
            <person name="Ganesan B."/>
            <person name="Xie Y."/>
            <person name="Rawsthorne H."/>
            <person name="Tamir D."/>
            <person name="Parker C."/>
            <person name="Breidt F."/>
            <person name="Broadbent J.R."/>
            <person name="Hutkins R."/>
            <person name="O'Sullivan D."/>
            <person name="Steele J."/>
            <person name="Unlu G."/>
            <person name="Saier M.H. Jr."/>
            <person name="Klaenhammer T."/>
            <person name="Richardson P."/>
            <person name="Kozyavkin S."/>
            <person name="Weimer B.C."/>
            <person name="Mills D.A."/>
        </authorList>
    </citation>
    <scope>NUCLEOTIDE SEQUENCE [LARGE SCALE GENOMIC DNA]</scope>
    <source>
        <strain>ATCC 334 / BCRC 17002 / CCUG 31169 / CIP 107868 / KCTC 3260 / NRRL B-441</strain>
    </source>
</reference>
<comment type="similarity">
    <text evidence="1">Belongs to the CinA family.</text>
</comment>